<feature type="chain" id="PRO_0000116569" description="25S rRNA (adenine(645)-N(1))-methyltransferase">
    <location>
        <begin position="1"/>
        <end position="318"/>
    </location>
</feature>
<feature type="region of interest" description="Disordered" evidence="3">
    <location>
        <begin position="1"/>
        <end position="85"/>
    </location>
</feature>
<feature type="compositionally biased region" description="Basic and acidic residues" evidence="3">
    <location>
        <begin position="33"/>
        <end position="48"/>
    </location>
</feature>
<feature type="compositionally biased region" description="Basic and acidic residues" evidence="3">
    <location>
        <begin position="62"/>
        <end position="83"/>
    </location>
</feature>
<feature type="binding site" evidence="2">
    <location>
        <position position="132"/>
    </location>
    <ligand>
        <name>S-adenosyl-L-methionine</name>
        <dbReference type="ChEBI" id="CHEBI:59789"/>
    </ligand>
</feature>
<feature type="binding site" evidence="2">
    <location>
        <position position="175"/>
    </location>
    <ligand>
        <name>S-adenosyl-L-methionine</name>
        <dbReference type="ChEBI" id="CHEBI:59789"/>
    </ligand>
</feature>
<feature type="binding site" evidence="2">
    <location>
        <position position="197"/>
    </location>
    <ligand>
        <name>S-adenosyl-L-methionine</name>
        <dbReference type="ChEBI" id="CHEBI:59789"/>
    </ligand>
</feature>
<feature type="binding site" evidence="2">
    <location>
        <position position="209"/>
    </location>
    <ligand>
        <name>S-adenosyl-L-methionine</name>
        <dbReference type="ChEBI" id="CHEBI:59789"/>
    </ligand>
</feature>
<feature type="binding site" evidence="2">
    <location>
        <position position="226"/>
    </location>
    <ligand>
        <name>S-adenosyl-L-methionine</name>
        <dbReference type="ChEBI" id="CHEBI:59789"/>
    </ligand>
</feature>
<accession>Q10257</accession>
<proteinExistence type="inferred from homology"/>
<comment type="function">
    <text evidence="1">S-adenosyl-L-methionine-dependent methyltransferase that specifically methylates the N(1) position of adenine in helix 25.1 in 25S rRNA. Required both for ribosomal 40S and 60S subunits biogenesis. Required for efficient pre-rRNA cleavage at site A2 (By similarity).</text>
</comment>
<comment type="catalytic activity">
    <reaction>
        <text>adenosine(645) in 25S rRNA + S-adenosyl-L-methionine = N(1)-methyladenosine(645) in 25S rRNA + S-adenosyl-L-homocysteine + H(+)</text>
        <dbReference type="Rhea" id="RHEA:43792"/>
        <dbReference type="Rhea" id="RHEA-COMP:10695"/>
        <dbReference type="Rhea" id="RHEA-COMP:10696"/>
        <dbReference type="ChEBI" id="CHEBI:15378"/>
        <dbReference type="ChEBI" id="CHEBI:57856"/>
        <dbReference type="ChEBI" id="CHEBI:59789"/>
        <dbReference type="ChEBI" id="CHEBI:74411"/>
        <dbReference type="ChEBI" id="CHEBI:74491"/>
        <dbReference type="EC" id="2.1.1.287"/>
    </reaction>
</comment>
<comment type="subcellular location">
    <subcellularLocation>
        <location evidence="4">Nucleus</location>
        <location evidence="4">Nucleolus</location>
    </subcellularLocation>
</comment>
<comment type="similarity">
    <text evidence="5">Belongs to the methyltransferase superfamily. RRP8 family.</text>
</comment>
<reference key="1">
    <citation type="journal article" date="2002" name="Nature">
        <title>The genome sequence of Schizosaccharomyces pombe.</title>
        <authorList>
            <person name="Wood V."/>
            <person name="Gwilliam R."/>
            <person name="Rajandream M.A."/>
            <person name="Lyne M.H."/>
            <person name="Lyne R."/>
            <person name="Stewart A."/>
            <person name="Sgouros J.G."/>
            <person name="Peat N."/>
            <person name="Hayles J."/>
            <person name="Baker S.G."/>
            <person name="Basham D."/>
            <person name="Bowman S."/>
            <person name="Brooks K."/>
            <person name="Brown D."/>
            <person name="Brown S."/>
            <person name="Chillingworth T."/>
            <person name="Churcher C.M."/>
            <person name="Collins M."/>
            <person name="Connor R."/>
            <person name="Cronin A."/>
            <person name="Davis P."/>
            <person name="Feltwell T."/>
            <person name="Fraser A."/>
            <person name="Gentles S."/>
            <person name="Goble A."/>
            <person name="Hamlin N."/>
            <person name="Harris D.E."/>
            <person name="Hidalgo J."/>
            <person name="Hodgson G."/>
            <person name="Holroyd S."/>
            <person name="Hornsby T."/>
            <person name="Howarth S."/>
            <person name="Huckle E.J."/>
            <person name="Hunt S."/>
            <person name="Jagels K."/>
            <person name="James K.D."/>
            <person name="Jones L."/>
            <person name="Jones M."/>
            <person name="Leather S."/>
            <person name="McDonald S."/>
            <person name="McLean J."/>
            <person name="Mooney P."/>
            <person name="Moule S."/>
            <person name="Mungall K.L."/>
            <person name="Murphy L.D."/>
            <person name="Niblett D."/>
            <person name="Odell C."/>
            <person name="Oliver K."/>
            <person name="O'Neil S."/>
            <person name="Pearson D."/>
            <person name="Quail M.A."/>
            <person name="Rabbinowitsch E."/>
            <person name="Rutherford K.M."/>
            <person name="Rutter S."/>
            <person name="Saunders D."/>
            <person name="Seeger K."/>
            <person name="Sharp S."/>
            <person name="Skelton J."/>
            <person name="Simmonds M.N."/>
            <person name="Squares R."/>
            <person name="Squares S."/>
            <person name="Stevens K."/>
            <person name="Taylor K."/>
            <person name="Taylor R.G."/>
            <person name="Tivey A."/>
            <person name="Walsh S.V."/>
            <person name="Warren T."/>
            <person name="Whitehead S."/>
            <person name="Woodward J.R."/>
            <person name="Volckaert G."/>
            <person name="Aert R."/>
            <person name="Robben J."/>
            <person name="Grymonprez B."/>
            <person name="Weltjens I."/>
            <person name="Vanstreels E."/>
            <person name="Rieger M."/>
            <person name="Schaefer M."/>
            <person name="Mueller-Auer S."/>
            <person name="Gabel C."/>
            <person name="Fuchs M."/>
            <person name="Duesterhoeft A."/>
            <person name="Fritzc C."/>
            <person name="Holzer E."/>
            <person name="Moestl D."/>
            <person name="Hilbert H."/>
            <person name="Borzym K."/>
            <person name="Langer I."/>
            <person name="Beck A."/>
            <person name="Lehrach H."/>
            <person name="Reinhardt R."/>
            <person name="Pohl T.M."/>
            <person name="Eger P."/>
            <person name="Zimmermann W."/>
            <person name="Wedler H."/>
            <person name="Wambutt R."/>
            <person name="Purnelle B."/>
            <person name="Goffeau A."/>
            <person name="Cadieu E."/>
            <person name="Dreano S."/>
            <person name="Gloux S."/>
            <person name="Lelaure V."/>
            <person name="Mottier S."/>
            <person name="Galibert F."/>
            <person name="Aves S.J."/>
            <person name="Xiang Z."/>
            <person name="Hunt C."/>
            <person name="Moore K."/>
            <person name="Hurst S.M."/>
            <person name="Lucas M."/>
            <person name="Rochet M."/>
            <person name="Gaillardin C."/>
            <person name="Tallada V.A."/>
            <person name="Garzon A."/>
            <person name="Thode G."/>
            <person name="Daga R.R."/>
            <person name="Cruzado L."/>
            <person name="Jimenez J."/>
            <person name="Sanchez M."/>
            <person name="del Rey F."/>
            <person name="Benito J."/>
            <person name="Dominguez A."/>
            <person name="Revuelta J.L."/>
            <person name="Moreno S."/>
            <person name="Armstrong J."/>
            <person name="Forsburg S.L."/>
            <person name="Cerutti L."/>
            <person name="Lowe T."/>
            <person name="McCombie W.R."/>
            <person name="Paulsen I."/>
            <person name="Potashkin J."/>
            <person name="Shpakovski G.V."/>
            <person name="Ussery D."/>
            <person name="Barrell B.G."/>
            <person name="Nurse P."/>
        </authorList>
    </citation>
    <scope>NUCLEOTIDE SEQUENCE [LARGE SCALE GENOMIC DNA]</scope>
    <source>
        <strain>972 / ATCC 24843</strain>
    </source>
</reference>
<reference key="2">
    <citation type="journal article" date="2006" name="Nat. Biotechnol.">
        <title>ORFeome cloning and global analysis of protein localization in the fission yeast Schizosaccharomyces pombe.</title>
        <authorList>
            <person name="Matsuyama A."/>
            <person name="Arai R."/>
            <person name="Yashiroda Y."/>
            <person name="Shirai A."/>
            <person name="Kamata A."/>
            <person name="Sekido S."/>
            <person name="Kobayashi Y."/>
            <person name="Hashimoto A."/>
            <person name="Hamamoto M."/>
            <person name="Hiraoka Y."/>
            <person name="Horinouchi S."/>
            <person name="Yoshida M."/>
        </authorList>
    </citation>
    <scope>SUBCELLULAR LOCATION [LARGE SCALE ANALYSIS]</scope>
</reference>
<gene>
    <name type="primary">rrp8</name>
    <name type="ORF">SPAC56F8.09</name>
</gene>
<dbReference type="EC" id="2.1.1.287"/>
<dbReference type="EMBL" id="CU329670">
    <property type="protein sequence ID" value="CAA93580.1"/>
    <property type="molecule type" value="Genomic_DNA"/>
</dbReference>
<dbReference type="PIR" id="T38919">
    <property type="entry name" value="T38919"/>
</dbReference>
<dbReference type="RefSeq" id="NP_593223.1">
    <property type="nucleotide sequence ID" value="NM_001018620.2"/>
</dbReference>
<dbReference type="SMR" id="Q10257"/>
<dbReference type="BioGRID" id="279647">
    <property type="interactions" value="11"/>
</dbReference>
<dbReference type="FunCoup" id="Q10257">
    <property type="interactions" value="450"/>
</dbReference>
<dbReference type="STRING" id="284812.Q10257"/>
<dbReference type="PaxDb" id="4896-SPAC56F8.09.1"/>
<dbReference type="EnsemblFungi" id="SPAC56F8.09.1">
    <property type="protein sequence ID" value="SPAC56F8.09.1:pep"/>
    <property type="gene ID" value="SPAC56F8.09"/>
</dbReference>
<dbReference type="GeneID" id="2543219"/>
<dbReference type="KEGG" id="spo:2543219"/>
<dbReference type="PomBase" id="SPAC56F8.09">
    <property type="gene designation" value="rrp8"/>
</dbReference>
<dbReference type="VEuPathDB" id="FungiDB:SPAC56F8.09"/>
<dbReference type="eggNOG" id="KOG3045">
    <property type="taxonomic scope" value="Eukaryota"/>
</dbReference>
<dbReference type="HOGENOM" id="CLU_027694_1_0_1"/>
<dbReference type="InParanoid" id="Q10257"/>
<dbReference type="OMA" id="SCTIVVF"/>
<dbReference type="PhylomeDB" id="Q10257"/>
<dbReference type="BRENDA" id="2.1.1.287">
    <property type="organism ID" value="5613"/>
</dbReference>
<dbReference type="Reactome" id="R-SPO-427359">
    <property type="pathway name" value="SIRT1 negatively regulates rRNA expression"/>
</dbReference>
<dbReference type="PRO" id="PR:Q10257"/>
<dbReference type="Proteomes" id="UP000002485">
    <property type="component" value="Chromosome I"/>
</dbReference>
<dbReference type="GO" id="GO:0005730">
    <property type="term" value="C:nucleolus"/>
    <property type="evidence" value="ECO:0007005"/>
    <property type="project" value="PomBase"/>
</dbReference>
<dbReference type="GO" id="GO:0005634">
    <property type="term" value="C:nucleus"/>
    <property type="evidence" value="ECO:0007005"/>
    <property type="project" value="PomBase"/>
</dbReference>
<dbReference type="GO" id="GO:0016433">
    <property type="term" value="F:rRNA (adenine) methyltransferase activity"/>
    <property type="evidence" value="ECO:0000318"/>
    <property type="project" value="GO_Central"/>
</dbReference>
<dbReference type="GO" id="GO:0106142">
    <property type="term" value="F:rRNA (adenine-N1-)-methyltransferase activity"/>
    <property type="evidence" value="ECO:0000316"/>
    <property type="project" value="PomBase"/>
</dbReference>
<dbReference type="GO" id="GO:0042273">
    <property type="term" value="P:ribosomal large subunit biogenesis"/>
    <property type="evidence" value="ECO:0000318"/>
    <property type="project" value="GO_Central"/>
</dbReference>
<dbReference type="GO" id="GO:0031167">
    <property type="term" value="P:rRNA methylation"/>
    <property type="evidence" value="ECO:0000316"/>
    <property type="project" value="PomBase"/>
</dbReference>
<dbReference type="CDD" id="cd02440">
    <property type="entry name" value="AdoMet_MTases"/>
    <property type="match status" value="1"/>
</dbReference>
<dbReference type="FunFam" id="1.10.10.2150:FF:000001">
    <property type="entry name" value="Ribosomal RNA-processing protein 8"/>
    <property type="match status" value="1"/>
</dbReference>
<dbReference type="Gene3D" id="1.10.10.2150">
    <property type="entry name" value="Ribosomal RNA-processing protein 8, N-terminal domain"/>
    <property type="match status" value="1"/>
</dbReference>
<dbReference type="Gene3D" id="3.40.50.150">
    <property type="entry name" value="Vaccinia Virus protein VP39"/>
    <property type="match status" value="1"/>
</dbReference>
<dbReference type="InterPro" id="IPR007823">
    <property type="entry name" value="RRP8"/>
</dbReference>
<dbReference type="InterPro" id="IPR042036">
    <property type="entry name" value="RRP8_N"/>
</dbReference>
<dbReference type="InterPro" id="IPR029063">
    <property type="entry name" value="SAM-dependent_MTases_sf"/>
</dbReference>
<dbReference type="PANTHER" id="PTHR12787">
    <property type="entry name" value="RIBOSOMAL RNA-PROCESSING PROTEIN 8"/>
    <property type="match status" value="1"/>
</dbReference>
<dbReference type="PANTHER" id="PTHR12787:SF0">
    <property type="entry name" value="RIBOSOMAL RNA-PROCESSING PROTEIN 8"/>
    <property type="match status" value="1"/>
</dbReference>
<dbReference type="Pfam" id="PF05148">
    <property type="entry name" value="Methyltransf_8"/>
    <property type="match status" value="1"/>
</dbReference>
<dbReference type="SUPFAM" id="SSF53335">
    <property type="entry name" value="S-adenosyl-L-methionine-dependent methyltransferases"/>
    <property type="match status" value="1"/>
</dbReference>
<name>RRP8_SCHPO</name>
<evidence type="ECO:0000250" key="1"/>
<evidence type="ECO:0000250" key="2">
    <source>
        <dbReference type="UniProtKB" id="O43159"/>
    </source>
</evidence>
<evidence type="ECO:0000256" key="3">
    <source>
        <dbReference type="SAM" id="MobiDB-lite"/>
    </source>
</evidence>
<evidence type="ECO:0000269" key="4">
    <source>
    </source>
</evidence>
<evidence type="ECO:0000305" key="5"/>
<organism>
    <name type="scientific">Schizosaccharomyces pombe (strain 972 / ATCC 24843)</name>
    <name type="common">Fission yeast</name>
    <dbReference type="NCBI Taxonomy" id="284812"/>
    <lineage>
        <taxon>Eukaryota</taxon>
        <taxon>Fungi</taxon>
        <taxon>Dikarya</taxon>
        <taxon>Ascomycota</taxon>
        <taxon>Taphrinomycotina</taxon>
        <taxon>Schizosaccharomycetes</taxon>
        <taxon>Schizosaccharomycetales</taxon>
        <taxon>Schizosaccharomycetaceae</taxon>
        <taxon>Schizosaccharomyces</taxon>
    </lineage>
</organism>
<protein>
    <recommendedName>
        <fullName>25S rRNA (adenine(645)-N(1))-methyltransferase</fullName>
        <ecNumber>2.1.1.287</ecNumber>
    </recommendedName>
    <alternativeName>
        <fullName>Ribosomal RNA-processing protein 8</fullName>
    </alternativeName>
</protein>
<sequence>MFKVDWDLGPVSKSASDQTKESRKEKKRKKGERKNVGDKGEKLNEKVLKKAKSVTTNNSLKSEIKKEKSVPSIKEKNKGDAKHTKLTSLQQKMKDKLDGANFRWINEQLYTTESDKAVQMFKENPDLFDIYHAGFRYQVEGWPENPVDIFIQHLKIRFEHSNAKKKNNIVIADLGCGEAKIASTFRKSRSLQVHSFDLVAPNEHVVACDIANVPMADETVDIAVFCLSLMGTNWQSFLKEAYRILKVGGLLWVAEIKSRFSDKSGEVFAKELPKLGFETKSIQLQNKMFTLFEFKKVPVHGKCEELPPILSACIYKRR</sequence>
<keyword id="KW-0489">Methyltransferase</keyword>
<keyword id="KW-0539">Nucleus</keyword>
<keyword id="KW-1185">Reference proteome</keyword>
<keyword id="KW-0698">rRNA processing</keyword>
<keyword id="KW-0949">S-adenosyl-L-methionine</keyword>
<keyword id="KW-0808">Transferase</keyword>